<gene>
    <name type="ordered locus">BCAH820_1240</name>
</gene>
<name>Y1240_BACC0</name>
<keyword id="KW-0547">Nucleotide-binding</keyword>
<evidence type="ECO:0000255" key="1">
    <source>
        <dbReference type="HAMAP-Rule" id="MF_00632"/>
    </source>
</evidence>
<reference key="1">
    <citation type="submission" date="2008-10" db="EMBL/GenBank/DDBJ databases">
        <title>Genome sequence of Bacillus cereus AH820.</title>
        <authorList>
            <person name="Dodson R.J."/>
            <person name="Durkin A.S."/>
            <person name="Rosovitz M.J."/>
            <person name="Rasko D.A."/>
            <person name="Hoffmaster A."/>
            <person name="Ravel J."/>
            <person name="Sutton G."/>
        </authorList>
    </citation>
    <scope>NUCLEOTIDE SEQUENCE [LARGE SCALE GENOMIC DNA]</scope>
    <source>
        <strain>AH820</strain>
    </source>
</reference>
<dbReference type="EMBL" id="CP001283">
    <property type="protein sequence ID" value="ACK90271.1"/>
    <property type="molecule type" value="Genomic_DNA"/>
</dbReference>
<dbReference type="RefSeq" id="WP_001040153.1">
    <property type="nucleotide sequence ID" value="NC_011773.1"/>
</dbReference>
<dbReference type="SMR" id="B7JDW4"/>
<dbReference type="KEGG" id="bcu:BCAH820_1240"/>
<dbReference type="HOGENOM" id="CLU_099839_1_0_9"/>
<dbReference type="Proteomes" id="UP000001363">
    <property type="component" value="Chromosome"/>
</dbReference>
<dbReference type="GO" id="GO:0005829">
    <property type="term" value="C:cytosol"/>
    <property type="evidence" value="ECO:0007669"/>
    <property type="project" value="TreeGrafter"/>
</dbReference>
<dbReference type="GO" id="GO:0000166">
    <property type="term" value="F:nucleotide binding"/>
    <property type="evidence" value="ECO:0007669"/>
    <property type="project" value="TreeGrafter"/>
</dbReference>
<dbReference type="CDD" id="cd11740">
    <property type="entry name" value="YajQ_like"/>
    <property type="match status" value="1"/>
</dbReference>
<dbReference type="FunFam" id="3.30.70.990:FF:000002">
    <property type="entry name" value="UPF0234 protein LEP1GSC067_4943"/>
    <property type="match status" value="1"/>
</dbReference>
<dbReference type="FunFam" id="3.30.70.860:FF:000003">
    <property type="entry name" value="UPF0234 protein YBT020_06460"/>
    <property type="match status" value="1"/>
</dbReference>
<dbReference type="Gene3D" id="3.30.70.860">
    <property type="match status" value="1"/>
</dbReference>
<dbReference type="Gene3D" id="3.30.70.990">
    <property type="entry name" value="YajQ-like, domain 2"/>
    <property type="match status" value="1"/>
</dbReference>
<dbReference type="HAMAP" id="MF_00632">
    <property type="entry name" value="YajQ"/>
    <property type="match status" value="1"/>
</dbReference>
<dbReference type="InterPro" id="IPR007551">
    <property type="entry name" value="DUF520"/>
</dbReference>
<dbReference type="InterPro" id="IPR035571">
    <property type="entry name" value="UPF0234-like_C"/>
</dbReference>
<dbReference type="InterPro" id="IPR035570">
    <property type="entry name" value="UPF0234_N"/>
</dbReference>
<dbReference type="InterPro" id="IPR036183">
    <property type="entry name" value="YajQ-like_sf"/>
</dbReference>
<dbReference type="NCBIfam" id="NF003819">
    <property type="entry name" value="PRK05412.1"/>
    <property type="match status" value="1"/>
</dbReference>
<dbReference type="PANTHER" id="PTHR30476">
    <property type="entry name" value="UPF0234 PROTEIN YAJQ"/>
    <property type="match status" value="1"/>
</dbReference>
<dbReference type="PANTHER" id="PTHR30476:SF0">
    <property type="entry name" value="UPF0234 PROTEIN YAJQ"/>
    <property type="match status" value="1"/>
</dbReference>
<dbReference type="Pfam" id="PF04461">
    <property type="entry name" value="DUF520"/>
    <property type="match status" value="1"/>
</dbReference>
<dbReference type="SUPFAM" id="SSF89963">
    <property type="entry name" value="YajQ-like"/>
    <property type="match status" value="2"/>
</dbReference>
<protein>
    <recommendedName>
        <fullName evidence="1">Nucleotide-binding protein BCAH820_1240</fullName>
    </recommendedName>
</protein>
<organism>
    <name type="scientific">Bacillus cereus (strain AH820)</name>
    <dbReference type="NCBI Taxonomy" id="405535"/>
    <lineage>
        <taxon>Bacteria</taxon>
        <taxon>Bacillati</taxon>
        <taxon>Bacillota</taxon>
        <taxon>Bacilli</taxon>
        <taxon>Bacillales</taxon>
        <taxon>Bacillaceae</taxon>
        <taxon>Bacillus</taxon>
        <taxon>Bacillus cereus group</taxon>
    </lineage>
</organism>
<sequence>MAKDSSFDIVSKVELPEVTNAINTALKEIQNRYDFKGSKSDIKLEKEVLVLTSDDEFKLEQVKDVLISKLVKRNVPIKNLDYGKVEAAAGNTVRQRATLQQGIDKDNAKKINNIIKEMKLKVKTQVQDDQVRVTAKSRDDLQAVIAAVRSADLPIDVQFINYR</sequence>
<comment type="function">
    <text evidence="1">Nucleotide-binding protein.</text>
</comment>
<comment type="similarity">
    <text evidence="1">Belongs to the YajQ family.</text>
</comment>
<proteinExistence type="inferred from homology"/>
<accession>B7JDW4</accession>
<feature type="chain" id="PRO_1000130598" description="Nucleotide-binding protein BCAH820_1240">
    <location>
        <begin position="1"/>
        <end position="163"/>
    </location>
</feature>